<reference key="1">
    <citation type="journal article" date="2007" name="J. Bacteriol.">
        <title>Complete genome of acute rheumatic fever-associated serotype M5 Streptococcus pyogenes strain Manfredo.</title>
        <authorList>
            <person name="Holden M.T.G."/>
            <person name="Scott A."/>
            <person name="Cherevach I."/>
            <person name="Chillingworth T."/>
            <person name="Churcher C."/>
            <person name="Cronin A."/>
            <person name="Dowd L."/>
            <person name="Feltwell T."/>
            <person name="Hamlin N."/>
            <person name="Holroyd S."/>
            <person name="Jagels K."/>
            <person name="Moule S."/>
            <person name="Mungall K."/>
            <person name="Quail M.A."/>
            <person name="Price C."/>
            <person name="Rabbinowitsch E."/>
            <person name="Sharp S."/>
            <person name="Skelton J."/>
            <person name="Whitehead S."/>
            <person name="Barrell B.G."/>
            <person name="Kehoe M."/>
            <person name="Parkhill J."/>
        </authorList>
    </citation>
    <scope>NUCLEOTIDE SEQUENCE [LARGE SCALE GENOMIC DNA]</scope>
    <source>
        <strain>Manfredo</strain>
    </source>
</reference>
<name>PCP_STRPG</name>
<accession>A2RFZ5</accession>
<keyword id="KW-0963">Cytoplasm</keyword>
<keyword id="KW-0378">Hydrolase</keyword>
<keyword id="KW-0645">Protease</keyword>
<keyword id="KW-0788">Thiol protease</keyword>
<comment type="function">
    <text evidence="1">Removes 5-oxoproline from various penultimate amino acid residues except L-proline.</text>
</comment>
<comment type="catalytic activity">
    <reaction evidence="1">
        <text>Release of an N-terminal pyroglutamyl group from a polypeptide, the second amino acid generally not being Pro.</text>
        <dbReference type="EC" id="3.4.19.3"/>
    </reaction>
</comment>
<comment type="subunit">
    <text evidence="1">Homotetramer.</text>
</comment>
<comment type="subcellular location">
    <subcellularLocation>
        <location evidence="1">Cytoplasm</location>
    </subcellularLocation>
</comment>
<comment type="similarity">
    <text evidence="1">Belongs to the peptidase C15 family.</text>
</comment>
<sequence>MKILVTGFDPFGGEAINPALEAIKKLPATIHGAEIKCIEVPTVFQKSADVLQQHIESFQPDAVLCIGQAGGRTGLTPERVAINQDDARIPDNEGNQPIDTPIRADGKAAYFSTLPIKAMVAAIHQAGLPASVSNTAGTFVCNHLMYQALYLVDKYCPNAKAGFMHIPFMMEQVVDKPNTAAMNLDDITRGIEAAIFAIVDFKDRSDLKRVGGATH</sequence>
<proteinExistence type="inferred from homology"/>
<gene>
    <name evidence="1" type="primary">pcp</name>
    <name type="ordered locus">SpyM51453</name>
</gene>
<feature type="chain" id="PRO_1000050148" description="Pyrrolidone-carboxylate peptidase">
    <location>
        <begin position="1"/>
        <end position="215"/>
    </location>
</feature>
<feature type="active site" evidence="1">
    <location>
        <position position="78"/>
    </location>
</feature>
<feature type="active site" evidence="1">
    <location>
        <position position="141"/>
    </location>
</feature>
<feature type="active site" evidence="1">
    <location>
        <position position="165"/>
    </location>
</feature>
<dbReference type="EC" id="3.4.19.3" evidence="1"/>
<dbReference type="EMBL" id="AM295007">
    <property type="protein sequence ID" value="CAM30774.1"/>
    <property type="molecule type" value="Genomic_DNA"/>
</dbReference>
<dbReference type="RefSeq" id="WP_002994169.1">
    <property type="nucleotide sequence ID" value="NC_009332.1"/>
</dbReference>
<dbReference type="SMR" id="A2RFZ5"/>
<dbReference type="MEROPS" id="C15.001"/>
<dbReference type="KEGG" id="spf:SpyM51453"/>
<dbReference type="HOGENOM" id="CLU_043960_4_0_9"/>
<dbReference type="GO" id="GO:0005829">
    <property type="term" value="C:cytosol"/>
    <property type="evidence" value="ECO:0007669"/>
    <property type="project" value="InterPro"/>
</dbReference>
<dbReference type="GO" id="GO:0016920">
    <property type="term" value="F:pyroglutamyl-peptidase activity"/>
    <property type="evidence" value="ECO:0007669"/>
    <property type="project" value="UniProtKB-UniRule"/>
</dbReference>
<dbReference type="GO" id="GO:0006508">
    <property type="term" value="P:proteolysis"/>
    <property type="evidence" value="ECO:0007669"/>
    <property type="project" value="UniProtKB-KW"/>
</dbReference>
<dbReference type="CDD" id="cd00501">
    <property type="entry name" value="Peptidase_C15"/>
    <property type="match status" value="1"/>
</dbReference>
<dbReference type="FunFam" id="3.40.630.20:FF:000001">
    <property type="entry name" value="Pyrrolidone-carboxylate peptidase"/>
    <property type="match status" value="1"/>
</dbReference>
<dbReference type="Gene3D" id="3.40.630.20">
    <property type="entry name" value="Peptidase C15, pyroglutamyl peptidase I-like"/>
    <property type="match status" value="1"/>
</dbReference>
<dbReference type="HAMAP" id="MF_00417">
    <property type="entry name" value="Pyrrolid_peptidase"/>
    <property type="match status" value="1"/>
</dbReference>
<dbReference type="InterPro" id="IPR000816">
    <property type="entry name" value="Peptidase_C15"/>
</dbReference>
<dbReference type="InterPro" id="IPR016125">
    <property type="entry name" value="Peptidase_C15-like"/>
</dbReference>
<dbReference type="InterPro" id="IPR036440">
    <property type="entry name" value="Peptidase_C15-like_sf"/>
</dbReference>
<dbReference type="InterPro" id="IPR029762">
    <property type="entry name" value="PGP-I_bact-type"/>
</dbReference>
<dbReference type="InterPro" id="IPR033694">
    <property type="entry name" value="PGPEP1_Cys_AS"/>
</dbReference>
<dbReference type="InterPro" id="IPR033693">
    <property type="entry name" value="PGPEP1_Glu_AS"/>
</dbReference>
<dbReference type="NCBIfam" id="NF009676">
    <property type="entry name" value="PRK13197.1"/>
    <property type="match status" value="1"/>
</dbReference>
<dbReference type="NCBIfam" id="TIGR00504">
    <property type="entry name" value="pyro_pdase"/>
    <property type="match status" value="1"/>
</dbReference>
<dbReference type="PANTHER" id="PTHR23402">
    <property type="entry name" value="PROTEASE FAMILY C15 PYROGLUTAMYL-PEPTIDASE I-RELATED"/>
    <property type="match status" value="1"/>
</dbReference>
<dbReference type="PANTHER" id="PTHR23402:SF1">
    <property type="entry name" value="PYROGLUTAMYL-PEPTIDASE I"/>
    <property type="match status" value="1"/>
</dbReference>
<dbReference type="Pfam" id="PF01470">
    <property type="entry name" value="Peptidase_C15"/>
    <property type="match status" value="1"/>
</dbReference>
<dbReference type="PIRSF" id="PIRSF015592">
    <property type="entry name" value="Prld-crbxl_pptds"/>
    <property type="match status" value="1"/>
</dbReference>
<dbReference type="PRINTS" id="PR00706">
    <property type="entry name" value="PYROGLUPTASE"/>
</dbReference>
<dbReference type="SUPFAM" id="SSF53182">
    <property type="entry name" value="Pyrrolidone carboxyl peptidase (pyroglutamate aminopeptidase)"/>
    <property type="match status" value="1"/>
</dbReference>
<dbReference type="PROSITE" id="PS01334">
    <property type="entry name" value="PYRASE_CYS"/>
    <property type="match status" value="1"/>
</dbReference>
<dbReference type="PROSITE" id="PS01333">
    <property type="entry name" value="PYRASE_GLU"/>
    <property type="match status" value="1"/>
</dbReference>
<organism>
    <name type="scientific">Streptococcus pyogenes serotype M5 (strain Manfredo)</name>
    <dbReference type="NCBI Taxonomy" id="160491"/>
    <lineage>
        <taxon>Bacteria</taxon>
        <taxon>Bacillati</taxon>
        <taxon>Bacillota</taxon>
        <taxon>Bacilli</taxon>
        <taxon>Lactobacillales</taxon>
        <taxon>Streptococcaceae</taxon>
        <taxon>Streptococcus</taxon>
    </lineage>
</organism>
<evidence type="ECO:0000255" key="1">
    <source>
        <dbReference type="HAMAP-Rule" id="MF_00417"/>
    </source>
</evidence>
<protein>
    <recommendedName>
        <fullName evidence="1">Pyrrolidone-carboxylate peptidase</fullName>
        <ecNumber evidence="1">3.4.19.3</ecNumber>
    </recommendedName>
    <alternativeName>
        <fullName evidence="1">5-oxoprolyl-peptidase</fullName>
    </alternativeName>
    <alternativeName>
        <fullName evidence="1">Pyroglutamyl-peptidase I</fullName>
        <shortName evidence="1">PGP-I</shortName>
        <shortName evidence="1">Pyrase</shortName>
    </alternativeName>
</protein>